<sequence length="304" mass="33854">MELEQLKCFVAAAEELHFGRAAQKMGILPASLGRHLRLLEESLGTRLMSRTTRSVALTEDGVALLEEVRPLLHRLQTLAEEFRSRKTQQATVLRIGAIDSAAAGLIPPLLHDFRERFPGIITQLVEDKSIRLIPKLIAGRLDIVFIRPRDGLNRNLVVRTLTQETPVIALPVTHPLANRERISVDELREEPLIVPERRSRPHSYDLTMKLFEDAGLHPRIAQTADEKQTIINLVAAGIGSAIVPRWTAKLAVFGVTFVPLMTVGGISLRKLPLAAAWAKAVRDPGRDQLLELLDTNIDRYAEQA</sequence>
<reference key="1">
    <citation type="journal article" date="1995" name="J. Bacteriol.">
        <title>Sequence and mutational analysis of a tartrate utilization operon from Agrobacterium vitis.</title>
        <authorList>
            <person name="Crouzet P."/>
            <person name="Otten L."/>
        </authorList>
    </citation>
    <scope>NUCLEOTIDE SEQUENCE [GENOMIC DNA]</scope>
    <source>
        <strain>AB4</strain>
    </source>
</reference>
<geneLocation type="plasmid">
    <name>pTrAB4</name>
</geneLocation>
<name>TTUA4_AGRVI</name>
<organism>
    <name type="scientific">Agrobacterium vitis</name>
    <name type="common">Rhizobium vitis</name>
    <dbReference type="NCBI Taxonomy" id="373"/>
    <lineage>
        <taxon>Bacteria</taxon>
        <taxon>Pseudomonadati</taxon>
        <taxon>Pseudomonadota</taxon>
        <taxon>Alphaproteobacteria</taxon>
        <taxon>Hyphomicrobiales</taxon>
        <taxon>Rhizobiaceae</taxon>
        <taxon>Rhizobium/Agrobacterium group</taxon>
        <taxon>Agrobacterium</taxon>
    </lineage>
</organism>
<accession>P52669</accession>
<gene>
    <name type="primary">ttuA</name>
</gene>
<keyword id="KW-0238">DNA-binding</keyword>
<keyword id="KW-0614">Plasmid</keyword>
<keyword id="KW-0804">Transcription</keyword>
<keyword id="KW-0805">Transcription regulation</keyword>
<feature type="chain" id="PRO_0000105767" description="HTH-type transcriptional regulator TtuA">
    <location>
        <begin position="1"/>
        <end position="304"/>
    </location>
</feature>
<feature type="domain" description="HTH lysR-type" evidence="1">
    <location>
        <begin position="1"/>
        <end position="58"/>
    </location>
</feature>
<feature type="DNA-binding region" description="H-T-H motif" evidence="1">
    <location>
        <begin position="18"/>
        <end position="37"/>
    </location>
</feature>
<protein>
    <recommendedName>
        <fullName>HTH-type transcriptional regulator TtuA</fullName>
    </recommendedName>
    <alternativeName>
        <fullName>Tartrate utilization transcriptional regulator</fullName>
    </alternativeName>
</protein>
<dbReference type="EMBL" id="U25634">
    <property type="protein sequence ID" value="AAA68696.1"/>
    <property type="molecule type" value="Genomic_DNA"/>
</dbReference>
<dbReference type="SMR" id="P52669"/>
<dbReference type="GO" id="GO:0032993">
    <property type="term" value="C:protein-DNA complex"/>
    <property type="evidence" value="ECO:0007669"/>
    <property type="project" value="TreeGrafter"/>
</dbReference>
<dbReference type="GO" id="GO:0003677">
    <property type="term" value="F:DNA binding"/>
    <property type="evidence" value="ECO:0007669"/>
    <property type="project" value="UniProtKB-KW"/>
</dbReference>
<dbReference type="GO" id="GO:0003700">
    <property type="term" value="F:DNA-binding transcription factor activity"/>
    <property type="evidence" value="ECO:0007669"/>
    <property type="project" value="InterPro"/>
</dbReference>
<dbReference type="CDD" id="cd08414">
    <property type="entry name" value="PBP2_LTTR_aromatics_like"/>
    <property type="match status" value="1"/>
</dbReference>
<dbReference type="FunFam" id="1.10.10.10:FF:000001">
    <property type="entry name" value="LysR family transcriptional regulator"/>
    <property type="match status" value="1"/>
</dbReference>
<dbReference type="Gene3D" id="3.40.190.10">
    <property type="entry name" value="Periplasmic binding protein-like II"/>
    <property type="match status" value="2"/>
</dbReference>
<dbReference type="Gene3D" id="1.10.10.10">
    <property type="entry name" value="Winged helix-like DNA-binding domain superfamily/Winged helix DNA-binding domain"/>
    <property type="match status" value="1"/>
</dbReference>
<dbReference type="InterPro" id="IPR005119">
    <property type="entry name" value="LysR_subst-bd"/>
</dbReference>
<dbReference type="InterPro" id="IPR000847">
    <property type="entry name" value="Tscrpt_reg_HTH_LysR"/>
</dbReference>
<dbReference type="InterPro" id="IPR036388">
    <property type="entry name" value="WH-like_DNA-bd_sf"/>
</dbReference>
<dbReference type="InterPro" id="IPR036390">
    <property type="entry name" value="WH_DNA-bd_sf"/>
</dbReference>
<dbReference type="PANTHER" id="PTHR30346:SF0">
    <property type="entry name" value="HCA OPERON TRANSCRIPTIONAL ACTIVATOR HCAR"/>
    <property type="match status" value="1"/>
</dbReference>
<dbReference type="PANTHER" id="PTHR30346">
    <property type="entry name" value="TRANSCRIPTIONAL DUAL REGULATOR HCAR-RELATED"/>
    <property type="match status" value="1"/>
</dbReference>
<dbReference type="Pfam" id="PF00126">
    <property type="entry name" value="HTH_1"/>
    <property type="match status" value="1"/>
</dbReference>
<dbReference type="Pfam" id="PF03466">
    <property type="entry name" value="LysR_substrate"/>
    <property type="match status" value="1"/>
</dbReference>
<dbReference type="SUPFAM" id="SSF53850">
    <property type="entry name" value="Periplasmic binding protein-like II"/>
    <property type="match status" value="1"/>
</dbReference>
<dbReference type="SUPFAM" id="SSF46785">
    <property type="entry name" value="Winged helix' DNA-binding domain"/>
    <property type="match status" value="1"/>
</dbReference>
<dbReference type="PROSITE" id="PS50931">
    <property type="entry name" value="HTH_LYSR"/>
    <property type="match status" value="1"/>
</dbReference>
<evidence type="ECO:0000255" key="1">
    <source>
        <dbReference type="PROSITE-ProRule" id="PRU00253"/>
    </source>
</evidence>
<evidence type="ECO:0000305" key="2"/>
<proteinExistence type="inferred from homology"/>
<comment type="function">
    <text>Transcriptional regulator of the ttuABCDE tartrate utilization operon.</text>
</comment>
<comment type="similarity">
    <text evidence="2">Belongs to the LysR transcriptional regulatory family.</text>
</comment>